<protein>
    <recommendedName>
        <fullName evidence="1">Small ribosomal subunit protein bS20</fullName>
    </recommendedName>
    <alternativeName>
        <fullName evidence="3">30S ribosomal protein S20</fullName>
    </alternativeName>
</protein>
<reference key="1">
    <citation type="journal article" date="2006" name="J. Bacteriol.">
        <title>Pathogenomic sequence analysis of Bacillus cereus and Bacillus thuringiensis isolates closely related to Bacillus anthracis.</title>
        <authorList>
            <person name="Han C.S."/>
            <person name="Xie G."/>
            <person name="Challacombe J.F."/>
            <person name="Altherr M.R."/>
            <person name="Bhotika S.S."/>
            <person name="Bruce D."/>
            <person name="Campbell C.S."/>
            <person name="Campbell M.L."/>
            <person name="Chen J."/>
            <person name="Chertkov O."/>
            <person name="Cleland C."/>
            <person name="Dimitrijevic M."/>
            <person name="Doggett N.A."/>
            <person name="Fawcett J.J."/>
            <person name="Glavina T."/>
            <person name="Goodwin L.A."/>
            <person name="Hill K.K."/>
            <person name="Hitchcock P."/>
            <person name="Jackson P.J."/>
            <person name="Keim P."/>
            <person name="Kewalramani A.R."/>
            <person name="Longmire J."/>
            <person name="Lucas S."/>
            <person name="Malfatti S."/>
            <person name="McMurry K."/>
            <person name="Meincke L.J."/>
            <person name="Misra M."/>
            <person name="Moseman B.L."/>
            <person name="Mundt M."/>
            <person name="Munk A.C."/>
            <person name="Okinaka R.T."/>
            <person name="Parson-Quintana B."/>
            <person name="Reilly L.P."/>
            <person name="Richardson P."/>
            <person name="Robinson D.L."/>
            <person name="Rubin E."/>
            <person name="Saunders E."/>
            <person name="Tapia R."/>
            <person name="Tesmer J.G."/>
            <person name="Thayer N."/>
            <person name="Thompson L.S."/>
            <person name="Tice H."/>
            <person name="Ticknor L.O."/>
            <person name="Wills P.L."/>
            <person name="Brettin T.S."/>
            <person name="Gilna P."/>
        </authorList>
    </citation>
    <scope>NUCLEOTIDE SEQUENCE [LARGE SCALE GENOMIC DNA]</scope>
    <source>
        <strain>97-27</strain>
    </source>
</reference>
<keyword id="KW-0687">Ribonucleoprotein</keyword>
<keyword id="KW-0689">Ribosomal protein</keyword>
<keyword id="KW-0694">RNA-binding</keyword>
<keyword id="KW-0699">rRNA-binding</keyword>
<organism>
    <name type="scientific">Bacillus thuringiensis subsp. konkukian (strain 97-27)</name>
    <dbReference type="NCBI Taxonomy" id="281309"/>
    <lineage>
        <taxon>Bacteria</taxon>
        <taxon>Bacillati</taxon>
        <taxon>Bacillota</taxon>
        <taxon>Bacilli</taxon>
        <taxon>Bacillales</taxon>
        <taxon>Bacillaceae</taxon>
        <taxon>Bacillus</taxon>
        <taxon>Bacillus cereus group</taxon>
    </lineage>
</organism>
<name>RS20_BACHK</name>
<gene>
    <name evidence="1" type="primary">rpsT</name>
    <name type="ordered locus">BT9727_4059</name>
</gene>
<evidence type="ECO:0000255" key="1">
    <source>
        <dbReference type="HAMAP-Rule" id="MF_00500"/>
    </source>
</evidence>
<evidence type="ECO:0000256" key="2">
    <source>
        <dbReference type="SAM" id="MobiDB-lite"/>
    </source>
</evidence>
<evidence type="ECO:0000305" key="3"/>
<feature type="chain" id="PRO_0000167916" description="Small ribosomal subunit protein bS20">
    <location>
        <begin position="1"/>
        <end position="85"/>
    </location>
</feature>
<feature type="region of interest" description="Disordered" evidence="2">
    <location>
        <begin position="1"/>
        <end position="25"/>
    </location>
</feature>
<dbReference type="EMBL" id="AE017355">
    <property type="protein sequence ID" value="AAT60809.1"/>
    <property type="status" value="ALT_INIT"/>
    <property type="molecule type" value="Genomic_DNA"/>
</dbReference>
<dbReference type="RefSeq" id="WP_001274011.1">
    <property type="nucleotide sequence ID" value="NC_005957.1"/>
</dbReference>
<dbReference type="RefSeq" id="YP_038377.2">
    <property type="nucleotide sequence ID" value="NC_005957.1"/>
</dbReference>
<dbReference type="SMR" id="Q6HDJ9"/>
<dbReference type="GeneID" id="93006778"/>
<dbReference type="KEGG" id="btk:BT9727_4059"/>
<dbReference type="PATRIC" id="fig|281309.8.peg.4331"/>
<dbReference type="HOGENOM" id="CLU_160655_1_0_9"/>
<dbReference type="PRO" id="PR:Q6HDJ9"/>
<dbReference type="Proteomes" id="UP000001301">
    <property type="component" value="Chromosome"/>
</dbReference>
<dbReference type="GO" id="GO:0005829">
    <property type="term" value="C:cytosol"/>
    <property type="evidence" value="ECO:0007669"/>
    <property type="project" value="TreeGrafter"/>
</dbReference>
<dbReference type="GO" id="GO:0015935">
    <property type="term" value="C:small ribosomal subunit"/>
    <property type="evidence" value="ECO:0007669"/>
    <property type="project" value="TreeGrafter"/>
</dbReference>
<dbReference type="GO" id="GO:0070181">
    <property type="term" value="F:small ribosomal subunit rRNA binding"/>
    <property type="evidence" value="ECO:0007669"/>
    <property type="project" value="TreeGrafter"/>
</dbReference>
<dbReference type="GO" id="GO:0003735">
    <property type="term" value="F:structural constituent of ribosome"/>
    <property type="evidence" value="ECO:0007669"/>
    <property type="project" value="InterPro"/>
</dbReference>
<dbReference type="GO" id="GO:0006412">
    <property type="term" value="P:translation"/>
    <property type="evidence" value="ECO:0007669"/>
    <property type="project" value="UniProtKB-UniRule"/>
</dbReference>
<dbReference type="FunFam" id="1.20.58.110:FF:000001">
    <property type="entry name" value="30S ribosomal protein S20"/>
    <property type="match status" value="1"/>
</dbReference>
<dbReference type="Gene3D" id="1.20.58.110">
    <property type="entry name" value="Ribosomal protein S20"/>
    <property type="match status" value="1"/>
</dbReference>
<dbReference type="HAMAP" id="MF_00500">
    <property type="entry name" value="Ribosomal_bS20"/>
    <property type="match status" value="1"/>
</dbReference>
<dbReference type="InterPro" id="IPR002583">
    <property type="entry name" value="Ribosomal_bS20"/>
</dbReference>
<dbReference type="InterPro" id="IPR036510">
    <property type="entry name" value="Ribosomal_bS20_sf"/>
</dbReference>
<dbReference type="NCBIfam" id="TIGR00029">
    <property type="entry name" value="S20"/>
    <property type="match status" value="1"/>
</dbReference>
<dbReference type="PANTHER" id="PTHR33398">
    <property type="entry name" value="30S RIBOSOMAL PROTEIN S20"/>
    <property type="match status" value="1"/>
</dbReference>
<dbReference type="PANTHER" id="PTHR33398:SF1">
    <property type="entry name" value="SMALL RIBOSOMAL SUBUNIT PROTEIN BS20C"/>
    <property type="match status" value="1"/>
</dbReference>
<dbReference type="Pfam" id="PF01649">
    <property type="entry name" value="Ribosomal_S20p"/>
    <property type="match status" value="1"/>
</dbReference>
<dbReference type="SUPFAM" id="SSF46992">
    <property type="entry name" value="Ribosomal protein S20"/>
    <property type="match status" value="1"/>
</dbReference>
<sequence length="85" mass="9342">MANIKSAIKRAKLSEERRAHNASIKSDMRSAVKTVEALVTNNDLENAKEAFKTASKKLDKAARKGLIHQNAAARQKSRLAKQVNA</sequence>
<proteinExistence type="inferred from homology"/>
<accession>Q6HDJ9</accession>
<comment type="function">
    <text evidence="1">Binds directly to 16S ribosomal RNA.</text>
</comment>
<comment type="similarity">
    <text evidence="1">Belongs to the bacterial ribosomal protein bS20 family.</text>
</comment>
<comment type="sequence caution" evidence="3">
    <conflict type="erroneous initiation">
        <sequence resource="EMBL-CDS" id="AAT60809"/>
    </conflict>
</comment>